<proteinExistence type="evidence at protein level"/>
<reference key="1">
    <citation type="journal article" date="2013" name="Nature">
        <title>The zebrafish reference genome sequence and its relationship to the human genome.</title>
        <authorList>
            <person name="Howe K."/>
            <person name="Clark M.D."/>
            <person name="Torroja C.F."/>
            <person name="Torrance J."/>
            <person name="Berthelot C."/>
            <person name="Muffato M."/>
            <person name="Collins J.E."/>
            <person name="Humphray S."/>
            <person name="McLaren K."/>
            <person name="Matthews L."/>
            <person name="McLaren S."/>
            <person name="Sealy I."/>
            <person name="Caccamo M."/>
            <person name="Churcher C."/>
            <person name="Scott C."/>
            <person name="Barrett J.C."/>
            <person name="Koch R."/>
            <person name="Rauch G.J."/>
            <person name="White S."/>
            <person name="Chow W."/>
            <person name="Kilian B."/>
            <person name="Quintais L.T."/>
            <person name="Guerra-Assuncao J.A."/>
            <person name="Zhou Y."/>
            <person name="Gu Y."/>
            <person name="Yen J."/>
            <person name="Vogel J.H."/>
            <person name="Eyre T."/>
            <person name="Redmond S."/>
            <person name="Banerjee R."/>
            <person name="Chi J."/>
            <person name="Fu B."/>
            <person name="Langley E."/>
            <person name="Maguire S.F."/>
            <person name="Laird G.K."/>
            <person name="Lloyd D."/>
            <person name="Kenyon E."/>
            <person name="Donaldson S."/>
            <person name="Sehra H."/>
            <person name="Almeida-King J."/>
            <person name="Loveland J."/>
            <person name="Trevanion S."/>
            <person name="Jones M."/>
            <person name="Quail M."/>
            <person name="Willey D."/>
            <person name="Hunt A."/>
            <person name="Burton J."/>
            <person name="Sims S."/>
            <person name="McLay K."/>
            <person name="Plumb B."/>
            <person name="Davis J."/>
            <person name="Clee C."/>
            <person name="Oliver K."/>
            <person name="Clark R."/>
            <person name="Riddle C."/>
            <person name="Elliot D."/>
            <person name="Threadgold G."/>
            <person name="Harden G."/>
            <person name="Ware D."/>
            <person name="Begum S."/>
            <person name="Mortimore B."/>
            <person name="Kerry G."/>
            <person name="Heath P."/>
            <person name="Phillimore B."/>
            <person name="Tracey A."/>
            <person name="Corby N."/>
            <person name="Dunn M."/>
            <person name="Johnson C."/>
            <person name="Wood J."/>
            <person name="Clark S."/>
            <person name="Pelan S."/>
            <person name="Griffiths G."/>
            <person name="Smith M."/>
            <person name="Glithero R."/>
            <person name="Howden P."/>
            <person name="Barker N."/>
            <person name="Lloyd C."/>
            <person name="Stevens C."/>
            <person name="Harley J."/>
            <person name="Holt K."/>
            <person name="Panagiotidis G."/>
            <person name="Lovell J."/>
            <person name="Beasley H."/>
            <person name="Henderson C."/>
            <person name="Gordon D."/>
            <person name="Auger K."/>
            <person name="Wright D."/>
            <person name="Collins J."/>
            <person name="Raisen C."/>
            <person name="Dyer L."/>
            <person name="Leung K."/>
            <person name="Robertson L."/>
            <person name="Ambridge K."/>
            <person name="Leongamornlert D."/>
            <person name="McGuire S."/>
            <person name="Gilderthorp R."/>
            <person name="Griffiths C."/>
            <person name="Manthravadi D."/>
            <person name="Nichol S."/>
            <person name="Barker G."/>
            <person name="Whitehead S."/>
            <person name="Kay M."/>
            <person name="Brown J."/>
            <person name="Murnane C."/>
            <person name="Gray E."/>
            <person name="Humphries M."/>
            <person name="Sycamore N."/>
            <person name="Barker D."/>
            <person name="Saunders D."/>
            <person name="Wallis J."/>
            <person name="Babbage A."/>
            <person name="Hammond S."/>
            <person name="Mashreghi-Mohammadi M."/>
            <person name="Barr L."/>
            <person name="Martin S."/>
            <person name="Wray P."/>
            <person name="Ellington A."/>
            <person name="Matthews N."/>
            <person name="Ellwood M."/>
            <person name="Woodmansey R."/>
            <person name="Clark G."/>
            <person name="Cooper J."/>
            <person name="Tromans A."/>
            <person name="Grafham D."/>
            <person name="Skuce C."/>
            <person name="Pandian R."/>
            <person name="Andrews R."/>
            <person name="Harrison E."/>
            <person name="Kimberley A."/>
            <person name="Garnett J."/>
            <person name="Fosker N."/>
            <person name="Hall R."/>
            <person name="Garner P."/>
            <person name="Kelly D."/>
            <person name="Bird C."/>
            <person name="Palmer S."/>
            <person name="Gehring I."/>
            <person name="Berger A."/>
            <person name="Dooley C.M."/>
            <person name="Ersan-Urun Z."/>
            <person name="Eser C."/>
            <person name="Geiger H."/>
            <person name="Geisler M."/>
            <person name="Karotki L."/>
            <person name="Kirn A."/>
            <person name="Konantz J."/>
            <person name="Konantz M."/>
            <person name="Oberlander M."/>
            <person name="Rudolph-Geiger S."/>
            <person name="Teucke M."/>
            <person name="Lanz C."/>
            <person name="Raddatz G."/>
            <person name="Osoegawa K."/>
            <person name="Zhu B."/>
            <person name="Rapp A."/>
            <person name="Widaa S."/>
            <person name="Langford C."/>
            <person name="Yang F."/>
            <person name="Schuster S.C."/>
            <person name="Carter N.P."/>
            <person name="Harrow J."/>
            <person name="Ning Z."/>
            <person name="Herrero J."/>
            <person name="Searle S.M."/>
            <person name="Enright A."/>
            <person name="Geisler R."/>
            <person name="Plasterk R.H."/>
            <person name="Lee C."/>
            <person name="Westerfield M."/>
            <person name="de Jong P.J."/>
            <person name="Zon L.I."/>
            <person name="Postlethwait J.H."/>
            <person name="Nusslein-Volhard C."/>
            <person name="Hubbard T.J."/>
            <person name="Roest Crollius H."/>
            <person name="Rogers J."/>
            <person name="Stemple D.L."/>
        </authorList>
    </citation>
    <scope>NUCLEOTIDE SEQUENCE [LARGE SCALE GENOMIC DNA]</scope>
    <source>
        <strain>Tuebingen</strain>
    </source>
</reference>
<reference key="2">
    <citation type="journal article" date="2019" name="Am. J. Hum. Genet.">
        <title>TBC1D8B Loss-of-Function Mutations Lead to X-Linked Nephrotic Syndrome via Defective Trafficking Pathways.</title>
        <authorList>
            <person name="Dorval G."/>
            <person name="Kuzmuk V."/>
            <person name="Gribouval O."/>
            <person name="Welsh G.I."/>
            <person name="Bierzynska A."/>
            <person name="Schmitt A."/>
            <person name="Miserey-Lenkei S."/>
            <person name="Koziell A."/>
            <person name="Haq S."/>
            <person name="Benmerah A."/>
            <person name="Mollet G."/>
            <person name="Boyer O."/>
            <person name="Saleem M.A."/>
            <person name="Antignac C."/>
        </authorList>
    </citation>
    <scope>DEVELOPMENTAL STAGE</scope>
    <scope>DISRUPTION PHENOTYPE</scope>
</reference>
<accession>B0R0W9</accession>
<protein>
    <recommendedName>
        <fullName>TBC1 domain family member 8B</fullName>
    </recommendedName>
</protein>
<dbReference type="EMBL" id="AL929305">
    <property type="protein sequence ID" value="CAQ13286.1"/>
    <property type="molecule type" value="Genomic_DNA"/>
</dbReference>
<dbReference type="RefSeq" id="NP_001120987.1">
    <property type="nucleotide sequence ID" value="NM_001127515.1"/>
</dbReference>
<dbReference type="SMR" id="B0R0W9"/>
<dbReference type="FunCoup" id="B0R0W9">
    <property type="interactions" value="589"/>
</dbReference>
<dbReference type="STRING" id="7955.ENSDARP00000121850"/>
<dbReference type="PaxDb" id="7955-ENSDARP00000084038"/>
<dbReference type="PeptideAtlas" id="B0R0W9"/>
<dbReference type="Ensembl" id="ENSDART00000135153">
    <property type="protein sequence ID" value="ENSDARP00000121850"/>
    <property type="gene ID" value="ENSDARG00000062192"/>
</dbReference>
<dbReference type="GeneID" id="566657"/>
<dbReference type="KEGG" id="dre:566657"/>
<dbReference type="AGR" id="ZFIN:ZDB-GENE-030131-3135"/>
<dbReference type="CTD" id="54885"/>
<dbReference type="ZFIN" id="ZDB-GENE-030131-3135">
    <property type="gene designation" value="tbc1d8b"/>
</dbReference>
<dbReference type="eggNOG" id="KOG4347">
    <property type="taxonomic scope" value="Eukaryota"/>
</dbReference>
<dbReference type="HOGENOM" id="CLU_003535_0_1_1"/>
<dbReference type="InParanoid" id="B0R0W9"/>
<dbReference type="OMA" id="GYYTEVV"/>
<dbReference type="OrthoDB" id="17687at2759"/>
<dbReference type="PhylomeDB" id="B0R0W9"/>
<dbReference type="PRO" id="PR:B0R0W9"/>
<dbReference type="Proteomes" id="UP000000437">
    <property type="component" value="Chromosome 5"/>
</dbReference>
<dbReference type="Bgee" id="ENSDARG00000062192">
    <property type="expression patterns" value="Expressed in brain and 24 other cell types or tissues"/>
</dbReference>
<dbReference type="GO" id="GO:0005829">
    <property type="term" value="C:cytosol"/>
    <property type="evidence" value="ECO:0000250"/>
    <property type="project" value="UniProtKB"/>
</dbReference>
<dbReference type="GO" id="GO:0005509">
    <property type="term" value="F:calcium ion binding"/>
    <property type="evidence" value="ECO:0007669"/>
    <property type="project" value="InterPro"/>
</dbReference>
<dbReference type="GO" id="GO:0005096">
    <property type="term" value="F:GTPase activator activity"/>
    <property type="evidence" value="ECO:0000318"/>
    <property type="project" value="GO_Central"/>
</dbReference>
<dbReference type="GO" id="GO:0003094">
    <property type="term" value="P:glomerular filtration"/>
    <property type="evidence" value="ECO:0000315"/>
    <property type="project" value="UniProtKB"/>
</dbReference>
<dbReference type="GO" id="GO:0016192">
    <property type="term" value="P:vesicle-mediated transport"/>
    <property type="evidence" value="ECO:0000250"/>
    <property type="project" value="UniProtKB"/>
</dbReference>
<dbReference type="CDD" id="cd13350">
    <property type="entry name" value="PH-GRAM1_TBC1D8B"/>
    <property type="match status" value="1"/>
</dbReference>
<dbReference type="CDD" id="cd13352">
    <property type="entry name" value="PH-GRAM2_TBC1D8B"/>
    <property type="match status" value="1"/>
</dbReference>
<dbReference type="FunFam" id="2.30.29.30:FF:000013">
    <property type="entry name" value="Putative TBC1 domain family member 8B"/>
    <property type="match status" value="1"/>
</dbReference>
<dbReference type="FunFam" id="1.10.472.80:FF:000023">
    <property type="entry name" value="TBC1 domain family member 8B"/>
    <property type="match status" value="1"/>
</dbReference>
<dbReference type="FunFam" id="2.30.29.30:FF:000185">
    <property type="entry name" value="TBC1 domain family member 8B"/>
    <property type="match status" value="1"/>
</dbReference>
<dbReference type="FunFam" id="1.10.8.270:FF:000002">
    <property type="entry name" value="TBC1 domain family member 9B"/>
    <property type="match status" value="1"/>
</dbReference>
<dbReference type="Gene3D" id="1.10.238.10">
    <property type="entry name" value="EF-hand"/>
    <property type="match status" value="1"/>
</dbReference>
<dbReference type="Gene3D" id="2.30.29.30">
    <property type="entry name" value="Pleckstrin-homology domain (PH domain)/Phosphotyrosine-binding domain (PTB)"/>
    <property type="match status" value="2"/>
</dbReference>
<dbReference type="Gene3D" id="1.10.8.270">
    <property type="entry name" value="putative rabgap domain of human tbc1 domain family member 14 like domains"/>
    <property type="match status" value="1"/>
</dbReference>
<dbReference type="Gene3D" id="1.10.472.80">
    <property type="entry name" value="Ypt/Rab-GAP domain of gyp1p, domain 3"/>
    <property type="match status" value="1"/>
</dbReference>
<dbReference type="InterPro" id="IPR011992">
    <property type="entry name" value="EF-hand-dom_pair"/>
</dbReference>
<dbReference type="InterPro" id="IPR018247">
    <property type="entry name" value="EF_Hand_1_Ca_BS"/>
</dbReference>
<dbReference type="InterPro" id="IPR002048">
    <property type="entry name" value="EF_hand_dom"/>
</dbReference>
<dbReference type="InterPro" id="IPR004182">
    <property type="entry name" value="GRAM"/>
</dbReference>
<dbReference type="InterPro" id="IPR011993">
    <property type="entry name" value="PH-like_dom_sf"/>
</dbReference>
<dbReference type="InterPro" id="IPR000195">
    <property type="entry name" value="Rab-GAP-TBC_dom"/>
</dbReference>
<dbReference type="InterPro" id="IPR035969">
    <property type="entry name" value="Rab-GAP_TBC_sf"/>
</dbReference>
<dbReference type="InterPro" id="IPR036012">
    <property type="entry name" value="TBC1D8B_PH-GRAM1"/>
</dbReference>
<dbReference type="InterPro" id="IPR036015">
    <property type="entry name" value="TBC1D8B_PH-GRAM2"/>
</dbReference>
<dbReference type="PANTHER" id="PTHR47666">
    <property type="entry name" value="PROTEIN VASCULAR ASSOCIATED DEATH 1, CHLOROPLASTIC"/>
    <property type="match status" value="1"/>
</dbReference>
<dbReference type="PANTHER" id="PTHR47666:SF4">
    <property type="entry name" value="TBC1 DOMAIN FAMILY MEMBER 8B"/>
    <property type="match status" value="1"/>
</dbReference>
<dbReference type="Pfam" id="PF02893">
    <property type="entry name" value="GRAM"/>
    <property type="match status" value="2"/>
</dbReference>
<dbReference type="Pfam" id="PF00566">
    <property type="entry name" value="RabGAP-TBC"/>
    <property type="match status" value="1"/>
</dbReference>
<dbReference type="SMART" id="SM00568">
    <property type="entry name" value="GRAM"/>
    <property type="match status" value="2"/>
</dbReference>
<dbReference type="SMART" id="SM00164">
    <property type="entry name" value="TBC"/>
    <property type="match status" value="1"/>
</dbReference>
<dbReference type="SUPFAM" id="SSF47473">
    <property type="entry name" value="EF-hand"/>
    <property type="match status" value="1"/>
</dbReference>
<dbReference type="SUPFAM" id="SSF47923">
    <property type="entry name" value="Ypt/Rab-GAP domain of gyp1p"/>
    <property type="match status" value="2"/>
</dbReference>
<dbReference type="PROSITE" id="PS00018">
    <property type="entry name" value="EF_HAND_1"/>
    <property type="match status" value="1"/>
</dbReference>
<dbReference type="PROSITE" id="PS50222">
    <property type="entry name" value="EF_HAND_2"/>
    <property type="match status" value="1"/>
</dbReference>
<dbReference type="PROSITE" id="PS50086">
    <property type="entry name" value="TBC_RABGAP"/>
    <property type="match status" value="1"/>
</dbReference>
<evidence type="ECO:0000250" key="1">
    <source>
        <dbReference type="UniProtKB" id="Q0IIM8"/>
    </source>
</evidence>
<evidence type="ECO:0000250" key="2">
    <source>
        <dbReference type="UniProtKB" id="Q96BZ9"/>
    </source>
</evidence>
<evidence type="ECO:0000255" key="3"/>
<evidence type="ECO:0000255" key="4">
    <source>
        <dbReference type="PROSITE-ProRule" id="PRU00163"/>
    </source>
</evidence>
<evidence type="ECO:0000255" key="5">
    <source>
        <dbReference type="PROSITE-ProRule" id="PRU00448"/>
    </source>
</evidence>
<evidence type="ECO:0000256" key="6">
    <source>
        <dbReference type="SAM" id="MobiDB-lite"/>
    </source>
</evidence>
<evidence type="ECO:0000269" key="7">
    <source>
    </source>
</evidence>
<sequence>MWLKPEEVLLKNALKLWVTEKSNDYFVLQRRRGYGEDSGGLTGLLVGTLDTVLDSTAKVAPFRILHQTPDSQVYWTIACGASLEEISQHWDWLQQNIVRTLSVFDSGEDITSFVQGKIRGLIAEEGTSAGDEEDPERFREAVLRFERLFGLPQREKLVTYFSCSYWRGRVPNQGWIYLSTNFLCFYSYMLGNEVKLVYPWDEVSRLERTSSVLLAESIRVRVRGEDHFFSMLLRLQQTYLIMQQLADYAIVRFFDKETFHAEHPLANPLHITQRALEIHARNQSFRSFFRLPQEENLCEVYESFLWVPFSHVNTLGKICVSENYLCFASQDGSQCHLIIPLWEVFSVELPDRSSRALTVCLRGKRALRFSEVRDFERLAATIRRKCGTLGSPQHCITNPDEEGVMVGQSQAVSTEALMNVFHPHDAENLDPKMLKERMKEQSWQIHFAEYGRGTGMFCTKKTRDLIVRGVPETLRGELWMLFSGAVHDMISHPGYYGRLLEDCMGSSSLACDEIERDLHRSLPEHPAFQSDTGISALRRVLTAYAHRNPKIGYCQAMNILTSVLLLYAKEEEAFWLLVAVCERMLPDYFNRRIIGALVDQAVFEELIREHLTQLTEHMTDLSFFSSVSLSWFLTLFISVLPIESAVNVVDCFFYDGIKAILQLGLAVLDYNMDNLLCCNDDAEAVTVLNRFFDSVTNKDSPLPATVQQASATANDKSIQKVDISDLIKEAYEKYGDIRTEEVENMRKRNKLYVIQTLEDTTKQNVLRVVAQDVKFSASQLDELYLLFKNHDPSLPYLDQYQLDQSQFSSLFNLLQPWTTHTHSRSLARSAFHLLDENGDGLVNFKEFICGLDILYNRSFTEKLKLLFKLHLQPDSAEDGVIRKCPERGRAKVDLQEYLKQWQEDLQRREENIKDLPRINQVQFISLTKTLYSVFHGDEEEESLYRAVARVTSLLLRMEEVGRKLQDSSPQKTPQTTPTSTSQPESSPTKPTSPESETPAESRSTHDQPESPVSQHETAPSHSDITPNSTSHPSTPTSSPTETSSPVLDTPTDTPSSPCTVRDGDWSFSFEQILASLLNEPSVVRFFERVVNTDTLITRARKNQLKDAH</sequence>
<feature type="chain" id="PRO_0000337185" description="TBC1 domain family member 8B">
    <location>
        <begin position="1"/>
        <end position="1108"/>
    </location>
</feature>
<feature type="domain" description="GRAM 1" evidence="3">
    <location>
        <begin position="143"/>
        <end position="210"/>
    </location>
</feature>
<feature type="domain" description="GRAM 2" evidence="3">
    <location>
        <begin position="283"/>
        <end position="351"/>
    </location>
</feature>
<feature type="domain" description="Rab-GAP TBC" evidence="4">
    <location>
        <begin position="469"/>
        <end position="656"/>
    </location>
</feature>
<feature type="domain" description="EF-hand" evidence="5">
    <location>
        <begin position="822"/>
        <end position="857"/>
    </location>
</feature>
<feature type="region of interest" description="Disordered" evidence="6">
    <location>
        <begin position="961"/>
        <end position="1059"/>
    </location>
</feature>
<feature type="compositionally biased region" description="Low complexity" evidence="6">
    <location>
        <begin position="967"/>
        <end position="998"/>
    </location>
</feature>
<feature type="compositionally biased region" description="Polar residues" evidence="6">
    <location>
        <begin position="1010"/>
        <end position="1024"/>
    </location>
</feature>
<feature type="compositionally biased region" description="Low complexity" evidence="6">
    <location>
        <begin position="1025"/>
        <end position="1057"/>
    </location>
</feature>
<feature type="binding site" evidence="5">
    <location>
        <position position="835"/>
    </location>
    <ligand>
        <name>Ca(2+)</name>
        <dbReference type="ChEBI" id="CHEBI:29108"/>
    </ligand>
</feature>
<feature type="binding site" evidence="5">
    <location>
        <position position="837"/>
    </location>
    <ligand>
        <name>Ca(2+)</name>
        <dbReference type="ChEBI" id="CHEBI:29108"/>
    </ligand>
</feature>
<feature type="binding site" evidence="5">
    <location>
        <position position="839"/>
    </location>
    <ligand>
        <name>Ca(2+)</name>
        <dbReference type="ChEBI" id="CHEBI:29108"/>
    </ligand>
</feature>
<feature type="binding site" evidence="5">
    <location>
        <position position="846"/>
    </location>
    <ligand>
        <name>Ca(2+)</name>
        <dbReference type="ChEBI" id="CHEBI:29108"/>
    </ligand>
</feature>
<feature type="site" description="Arginine finger" evidence="2">
    <location>
        <position position="516"/>
    </location>
</feature>
<feature type="site" description="Glutamine finger" evidence="2">
    <location>
        <position position="555"/>
    </location>
</feature>
<gene>
    <name type="primary">tbc1d8b</name>
    <name type="ORF">si:dkey-110k5.6</name>
</gene>
<name>TBC8B_DANRE</name>
<comment type="function">
    <text evidence="1">Involved in vesicular recycling, probably as a GTPase-activating protein for Rab family protein(s).</text>
</comment>
<comment type="subcellular location">
    <subcellularLocation>
        <location evidence="1">Cytoplasm</location>
        <location evidence="1">Cytosol</location>
    </subcellularLocation>
</comment>
<comment type="developmental stage">
    <text evidence="7">Expressed in the embryonic neural tube, brain, pectoral fins and the pronephric glomerulus (at protein level).</text>
</comment>
<comment type="domain">
    <text evidence="2">The arginine and glutamine fingers are critical for the GTPase-activating mechanism, they pull out Rab's 'switch 2' glutamine and insert in Rab's active site.</text>
</comment>
<comment type="disruption phenotype">
    <text evidence="7">Morpholino knockdown of the protein causes pericardial edema, retracted glomerulus in an enlarged Bowman's capsule and glomerular permeability defects.</text>
</comment>
<keyword id="KW-0106">Calcium</keyword>
<keyword id="KW-0963">Cytoplasm</keyword>
<keyword id="KW-0343">GTPase activation</keyword>
<keyword id="KW-0479">Metal-binding</keyword>
<keyword id="KW-1185">Reference proteome</keyword>
<keyword id="KW-0677">Repeat</keyword>
<organism>
    <name type="scientific">Danio rerio</name>
    <name type="common">Zebrafish</name>
    <name type="synonym">Brachydanio rerio</name>
    <dbReference type="NCBI Taxonomy" id="7955"/>
    <lineage>
        <taxon>Eukaryota</taxon>
        <taxon>Metazoa</taxon>
        <taxon>Chordata</taxon>
        <taxon>Craniata</taxon>
        <taxon>Vertebrata</taxon>
        <taxon>Euteleostomi</taxon>
        <taxon>Actinopterygii</taxon>
        <taxon>Neopterygii</taxon>
        <taxon>Teleostei</taxon>
        <taxon>Ostariophysi</taxon>
        <taxon>Cypriniformes</taxon>
        <taxon>Danionidae</taxon>
        <taxon>Danioninae</taxon>
        <taxon>Danio</taxon>
    </lineage>
</organism>